<name>TRUA_EHRRG</name>
<sequence>MRYKIVIEYDGSNFIGWQKQNHNSNSIQEILEKAIFKFSKQHVTVYGAGRTDAGVHALGQVAHFDLTTDFETYIVRNAINYHLISHAIAVVHVEKTDTDFHARFSAKRRYYLYKIVNRYSPLTIDRNRAWLVHTPLNVENMIKAVCYIKGNHNFSSFRAKCCQSKSPVKTVDNLSITYNHPYIDINISAISFLHHQVRIIVGTLVECGKGYFPPEHIKTIMEANNRSYAGTTAPSYGLYFVKVDYS</sequence>
<proteinExistence type="inferred from homology"/>
<reference key="1">
    <citation type="journal article" date="2006" name="J. Bacteriol.">
        <title>Comparative genomic analysis of three strains of Ehrlichia ruminantium reveals an active process of genome size plasticity.</title>
        <authorList>
            <person name="Frutos R."/>
            <person name="Viari A."/>
            <person name="Ferraz C."/>
            <person name="Morgat A."/>
            <person name="Eychenie S."/>
            <person name="Kandassamy Y."/>
            <person name="Chantal I."/>
            <person name="Bensaid A."/>
            <person name="Coissac E."/>
            <person name="Vachiery N."/>
            <person name="Demaille J."/>
            <person name="Martinez D."/>
        </authorList>
    </citation>
    <scope>NUCLEOTIDE SEQUENCE [LARGE SCALE GENOMIC DNA]</scope>
    <source>
        <strain>Gardel</strain>
    </source>
</reference>
<gene>
    <name evidence="1" type="primary">truA</name>
    <name type="ordered locus">ERGA_CDS_04360</name>
</gene>
<keyword id="KW-0413">Isomerase</keyword>
<keyword id="KW-0819">tRNA processing</keyword>
<dbReference type="EC" id="5.4.99.12" evidence="1"/>
<dbReference type="EMBL" id="CR925677">
    <property type="protein sequence ID" value="CAI27888.1"/>
    <property type="molecule type" value="Genomic_DNA"/>
</dbReference>
<dbReference type="RefSeq" id="WP_011255566.1">
    <property type="nucleotide sequence ID" value="NC_006831.1"/>
</dbReference>
<dbReference type="SMR" id="Q5FGS1"/>
<dbReference type="KEGG" id="erg:ERGA_CDS_04360"/>
<dbReference type="HOGENOM" id="CLU_014673_0_2_5"/>
<dbReference type="OrthoDB" id="9811823at2"/>
<dbReference type="Proteomes" id="UP000000533">
    <property type="component" value="Chromosome"/>
</dbReference>
<dbReference type="GO" id="GO:0003723">
    <property type="term" value="F:RNA binding"/>
    <property type="evidence" value="ECO:0007669"/>
    <property type="project" value="InterPro"/>
</dbReference>
<dbReference type="GO" id="GO:0160147">
    <property type="term" value="F:tRNA pseudouridine(38-40) synthase activity"/>
    <property type="evidence" value="ECO:0007669"/>
    <property type="project" value="UniProtKB-EC"/>
</dbReference>
<dbReference type="GO" id="GO:0031119">
    <property type="term" value="P:tRNA pseudouridine synthesis"/>
    <property type="evidence" value="ECO:0007669"/>
    <property type="project" value="UniProtKB-UniRule"/>
</dbReference>
<dbReference type="CDD" id="cd02570">
    <property type="entry name" value="PseudoU_synth_EcTruA"/>
    <property type="match status" value="1"/>
</dbReference>
<dbReference type="FunFam" id="3.30.70.580:FF:000001">
    <property type="entry name" value="tRNA pseudouridine synthase A"/>
    <property type="match status" value="1"/>
</dbReference>
<dbReference type="Gene3D" id="3.30.70.660">
    <property type="entry name" value="Pseudouridine synthase I, catalytic domain, C-terminal subdomain"/>
    <property type="match status" value="1"/>
</dbReference>
<dbReference type="Gene3D" id="3.30.70.580">
    <property type="entry name" value="Pseudouridine synthase I, catalytic domain, N-terminal subdomain"/>
    <property type="match status" value="1"/>
</dbReference>
<dbReference type="HAMAP" id="MF_00171">
    <property type="entry name" value="TruA"/>
    <property type="match status" value="1"/>
</dbReference>
<dbReference type="InterPro" id="IPR020103">
    <property type="entry name" value="PsdUridine_synth_cat_dom_sf"/>
</dbReference>
<dbReference type="InterPro" id="IPR001406">
    <property type="entry name" value="PsdUridine_synth_TruA"/>
</dbReference>
<dbReference type="InterPro" id="IPR020097">
    <property type="entry name" value="PsdUridine_synth_TruA_a/b_dom"/>
</dbReference>
<dbReference type="InterPro" id="IPR020095">
    <property type="entry name" value="PsdUridine_synth_TruA_C"/>
</dbReference>
<dbReference type="InterPro" id="IPR020094">
    <property type="entry name" value="TruA/RsuA/RluB/E/F_N"/>
</dbReference>
<dbReference type="NCBIfam" id="TIGR00071">
    <property type="entry name" value="hisT_truA"/>
    <property type="match status" value="1"/>
</dbReference>
<dbReference type="PANTHER" id="PTHR11142">
    <property type="entry name" value="PSEUDOURIDYLATE SYNTHASE"/>
    <property type="match status" value="1"/>
</dbReference>
<dbReference type="PANTHER" id="PTHR11142:SF0">
    <property type="entry name" value="TRNA PSEUDOURIDINE SYNTHASE-LIKE 1"/>
    <property type="match status" value="1"/>
</dbReference>
<dbReference type="Pfam" id="PF01416">
    <property type="entry name" value="PseudoU_synth_1"/>
    <property type="match status" value="2"/>
</dbReference>
<dbReference type="PIRSF" id="PIRSF001430">
    <property type="entry name" value="tRNA_psdUrid_synth"/>
    <property type="match status" value="1"/>
</dbReference>
<dbReference type="SUPFAM" id="SSF55120">
    <property type="entry name" value="Pseudouridine synthase"/>
    <property type="match status" value="1"/>
</dbReference>
<feature type="chain" id="PRO_0000057378" description="tRNA pseudouridine synthase A">
    <location>
        <begin position="1"/>
        <end position="246"/>
    </location>
</feature>
<feature type="active site" description="Nucleophile" evidence="1">
    <location>
        <position position="52"/>
    </location>
</feature>
<feature type="binding site" evidence="1">
    <location>
        <position position="111"/>
    </location>
    <ligand>
        <name>substrate</name>
    </ligand>
</feature>
<protein>
    <recommendedName>
        <fullName evidence="1">tRNA pseudouridine synthase A</fullName>
        <ecNumber evidence="1">5.4.99.12</ecNumber>
    </recommendedName>
    <alternativeName>
        <fullName evidence="1">tRNA pseudouridine(38-40) synthase</fullName>
    </alternativeName>
    <alternativeName>
        <fullName evidence="1">tRNA pseudouridylate synthase I</fullName>
    </alternativeName>
    <alternativeName>
        <fullName evidence="1">tRNA-uridine isomerase I</fullName>
    </alternativeName>
</protein>
<comment type="function">
    <text evidence="1">Formation of pseudouridine at positions 38, 39 and 40 in the anticodon stem and loop of transfer RNAs.</text>
</comment>
<comment type="catalytic activity">
    <reaction evidence="1">
        <text>uridine(38/39/40) in tRNA = pseudouridine(38/39/40) in tRNA</text>
        <dbReference type="Rhea" id="RHEA:22376"/>
        <dbReference type="Rhea" id="RHEA-COMP:10085"/>
        <dbReference type="Rhea" id="RHEA-COMP:10087"/>
        <dbReference type="ChEBI" id="CHEBI:65314"/>
        <dbReference type="ChEBI" id="CHEBI:65315"/>
        <dbReference type="EC" id="5.4.99.12"/>
    </reaction>
</comment>
<comment type="subunit">
    <text evidence="1">Homodimer.</text>
</comment>
<comment type="similarity">
    <text evidence="1">Belongs to the tRNA pseudouridine synthase TruA family.</text>
</comment>
<accession>Q5FGS1</accession>
<evidence type="ECO:0000255" key="1">
    <source>
        <dbReference type="HAMAP-Rule" id="MF_00171"/>
    </source>
</evidence>
<organism>
    <name type="scientific">Ehrlichia ruminantium (strain Gardel)</name>
    <dbReference type="NCBI Taxonomy" id="302409"/>
    <lineage>
        <taxon>Bacteria</taxon>
        <taxon>Pseudomonadati</taxon>
        <taxon>Pseudomonadota</taxon>
        <taxon>Alphaproteobacteria</taxon>
        <taxon>Rickettsiales</taxon>
        <taxon>Anaplasmataceae</taxon>
        <taxon>Ehrlichia</taxon>
    </lineage>
</organism>